<name>BETA_PSEPG</name>
<sequence>MSQEFDYIIVGAGSAGNTLATRLTEDAGVTVLLLEAGGPDYRFDFRTQMPAALAFPLQGRRYNWAYETDPEPHMDGRRMECGRGKGLGGSSLINGMCYIRGNAMDFDGWAELPGLQDWTYLDCLPYFRKAETRDIGPNDYHGGEGPVSVATPKAGNNPLFHAMVEAGVQAGYPRTEDLNGYQQEGFGPMDRSVTKNGRRSSTARGYLDQAKKRPNLTIVTHALSDRVLFDGKRAVGVTYLVGDSEERVEARARKEVIVSSGAIASPQLLQRSGVGPRALLESLDIPVVHDLPGVGENLQDHLELYLQYACTQPVSLYPSLLWWNQPAIGAEWMFKGTGIGASNQFEAGGFIRTRPEFKWPNIQYHFLPVAINYNGSNGVKEHGFQAHMGSMRSPARGRIQAKSKDPRQHPSILFNYMSTEQDWQEFRDGIRLTREIMAQPALDPYRGREISPGADVQTDEQLDKFIREHAETAFHPSCSCKMGTDDMAVVDGEGRVHGMKGLRVVDASIMPLIITGNLNATTIMIAEKISDKIRGRKPLPRSTAKYYVAGDAPVKGKPMREVKQA</sequence>
<keyword id="KW-0274">FAD</keyword>
<keyword id="KW-0285">Flavoprotein</keyword>
<keyword id="KW-0520">NAD</keyword>
<keyword id="KW-0560">Oxidoreductase</keyword>
<protein>
    <recommendedName>
        <fullName evidence="1">Oxygen-dependent choline dehydrogenase</fullName>
        <shortName evidence="1">CDH</shortName>
        <shortName evidence="1">CHD</shortName>
        <ecNumber evidence="1">1.1.99.1</ecNumber>
    </recommendedName>
    <alternativeName>
        <fullName evidence="1">Betaine aldehyde dehydrogenase</fullName>
        <shortName evidence="1">BADH</shortName>
        <ecNumber evidence="1">1.2.1.8</ecNumber>
    </alternativeName>
</protein>
<proteinExistence type="inferred from homology"/>
<evidence type="ECO:0000255" key="1">
    <source>
        <dbReference type="HAMAP-Rule" id="MF_00750"/>
    </source>
</evidence>
<gene>
    <name evidence="1" type="primary">betA</name>
    <name type="ordered locus">PputGB1_5115</name>
</gene>
<organism>
    <name type="scientific">Pseudomonas putida (strain GB-1)</name>
    <dbReference type="NCBI Taxonomy" id="76869"/>
    <lineage>
        <taxon>Bacteria</taxon>
        <taxon>Pseudomonadati</taxon>
        <taxon>Pseudomonadota</taxon>
        <taxon>Gammaproteobacteria</taxon>
        <taxon>Pseudomonadales</taxon>
        <taxon>Pseudomonadaceae</taxon>
        <taxon>Pseudomonas</taxon>
    </lineage>
</organism>
<comment type="function">
    <text evidence="1">Involved in the biosynthesis of the osmoprotectant glycine betaine. Catalyzes the oxidation of choline to betaine aldehyde and betaine aldehyde to glycine betaine at the same rate.</text>
</comment>
<comment type="catalytic activity">
    <reaction evidence="1">
        <text>choline + A = betaine aldehyde + AH2</text>
        <dbReference type="Rhea" id="RHEA:17433"/>
        <dbReference type="ChEBI" id="CHEBI:13193"/>
        <dbReference type="ChEBI" id="CHEBI:15354"/>
        <dbReference type="ChEBI" id="CHEBI:15710"/>
        <dbReference type="ChEBI" id="CHEBI:17499"/>
        <dbReference type="EC" id="1.1.99.1"/>
    </reaction>
</comment>
<comment type="catalytic activity">
    <reaction evidence="1">
        <text>betaine aldehyde + NAD(+) + H2O = glycine betaine + NADH + 2 H(+)</text>
        <dbReference type="Rhea" id="RHEA:15305"/>
        <dbReference type="ChEBI" id="CHEBI:15377"/>
        <dbReference type="ChEBI" id="CHEBI:15378"/>
        <dbReference type="ChEBI" id="CHEBI:15710"/>
        <dbReference type="ChEBI" id="CHEBI:17750"/>
        <dbReference type="ChEBI" id="CHEBI:57540"/>
        <dbReference type="ChEBI" id="CHEBI:57945"/>
        <dbReference type="EC" id="1.2.1.8"/>
    </reaction>
</comment>
<comment type="cofactor">
    <cofactor evidence="1">
        <name>FAD</name>
        <dbReference type="ChEBI" id="CHEBI:57692"/>
    </cofactor>
</comment>
<comment type="pathway">
    <text evidence="1">Amine and polyamine biosynthesis; betaine biosynthesis via choline pathway; betaine aldehyde from choline (cytochrome c reductase route): step 1/1.</text>
</comment>
<comment type="similarity">
    <text evidence="1">Belongs to the GMC oxidoreductase family.</text>
</comment>
<accession>B0KN19</accession>
<dbReference type="EC" id="1.1.99.1" evidence="1"/>
<dbReference type="EC" id="1.2.1.8" evidence="1"/>
<dbReference type="EMBL" id="CP000926">
    <property type="protein sequence ID" value="ABZ01000.1"/>
    <property type="molecule type" value="Genomic_DNA"/>
</dbReference>
<dbReference type="RefSeq" id="WP_012274618.1">
    <property type="nucleotide sequence ID" value="NC_010322.1"/>
</dbReference>
<dbReference type="SMR" id="B0KN19"/>
<dbReference type="KEGG" id="ppg:PputGB1_5115"/>
<dbReference type="eggNOG" id="COG2303">
    <property type="taxonomic scope" value="Bacteria"/>
</dbReference>
<dbReference type="HOGENOM" id="CLU_002865_7_1_6"/>
<dbReference type="UniPathway" id="UPA00529">
    <property type="reaction ID" value="UER00385"/>
</dbReference>
<dbReference type="Proteomes" id="UP000002157">
    <property type="component" value="Chromosome"/>
</dbReference>
<dbReference type="GO" id="GO:0016020">
    <property type="term" value="C:membrane"/>
    <property type="evidence" value="ECO:0007669"/>
    <property type="project" value="TreeGrafter"/>
</dbReference>
<dbReference type="GO" id="GO:0008802">
    <property type="term" value="F:betaine-aldehyde dehydrogenase (NAD+) activity"/>
    <property type="evidence" value="ECO:0007669"/>
    <property type="project" value="UniProtKB-EC"/>
</dbReference>
<dbReference type="GO" id="GO:0008812">
    <property type="term" value="F:choline dehydrogenase activity"/>
    <property type="evidence" value="ECO:0007669"/>
    <property type="project" value="UniProtKB-UniRule"/>
</dbReference>
<dbReference type="GO" id="GO:0050660">
    <property type="term" value="F:flavin adenine dinucleotide binding"/>
    <property type="evidence" value="ECO:0007669"/>
    <property type="project" value="InterPro"/>
</dbReference>
<dbReference type="GO" id="GO:0019285">
    <property type="term" value="P:glycine betaine biosynthetic process from choline"/>
    <property type="evidence" value="ECO:0007669"/>
    <property type="project" value="UniProtKB-UniRule"/>
</dbReference>
<dbReference type="Gene3D" id="3.50.50.60">
    <property type="entry name" value="FAD/NAD(P)-binding domain"/>
    <property type="match status" value="1"/>
</dbReference>
<dbReference type="Gene3D" id="3.30.560.10">
    <property type="entry name" value="Glucose Oxidase, domain 3"/>
    <property type="match status" value="1"/>
</dbReference>
<dbReference type="HAMAP" id="MF_00750">
    <property type="entry name" value="Choline_dehydrogen"/>
    <property type="match status" value="1"/>
</dbReference>
<dbReference type="InterPro" id="IPR011533">
    <property type="entry name" value="BetA"/>
</dbReference>
<dbReference type="InterPro" id="IPR036188">
    <property type="entry name" value="FAD/NAD-bd_sf"/>
</dbReference>
<dbReference type="InterPro" id="IPR012132">
    <property type="entry name" value="GMC_OxRdtase"/>
</dbReference>
<dbReference type="InterPro" id="IPR000172">
    <property type="entry name" value="GMC_OxRdtase_N"/>
</dbReference>
<dbReference type="InterPro" id="IPR007867">
    <property type="entry name" value="GMC_OxRtase_C"/>
</dbReference>
<dbReference type="NCBIfam" id="TIGR01810">
    <property type="entry name" value="betA"/>
    <property type="match status" value="1"/>
</dbReference>
<dbReference type="NCBIfam" id="NF002550">
    <property type="entry name" value="PRK02106.1"/>
    <property type="match status" value="1"/>
</dbReference>
<dbReference type="PANTHER" id="PTHR11552:SF147">
    <property type="entry name" value="CHOLINE DEHYDROGENASE, MITOCHONDRIAL"/>
    <property type="match status" value="1"/>
</dbReference>
<dbReference type="PANTHER" id="PTHR11552">
    <property type="entry name" value="GLUCOSE-METHANOL-CHOLINE GMC OXIDOREDUCTASE"/>
    <property type="match status" value="1"/>
</dbReference>
<dbReference type="Pfam" id="PF05199">
    <property type="entry name" value="GMC_oxred_C"/>
    <property type="match status" value="1"/>
</dbReference>
<dbReference type="Pfam" id="PF00732">
    <property type="entry name" value="GMC_oxred_N"/>
    <property type="match status" value="1"/>
</dbReference>
<dbReference type="PIRSF" id="PIRSF000137">
    <property type="entry name" value="Alcohol_oxidase"/>
    <property type="match status" value="1"/>
</dbReference>
<dbReference type="SUPFAM" id="SSF54373">
    <property type="entry name" value="FAD-linked reductases, C-terminal domain"/>
    <property type="match status" value="1"/>
</dbReference>
<dbReference type="SUPFAM" id="SSF51905">
    <property type="entry name" value="FAD/NAD(P)-binding domain"/>
    <property type="match status" value="1"/>
</dbReference>
<dbReference type="PROSITE" id="PS00623">
    <property type="entry name" value="GMC_OXRED_1"/>
    <property type="match status" value="1"/>
</dbReference>
<dbReference type="PROSITE" id="PS00624">
    <property type="entry name" value="GMC_OXRED_2"/>
    <property type="match status" value="1"/>
</dbReference>
<reference key="1">
    <citation type="submission" date="2008-01" db="EMBL/GenBank/DDBJ databases">
        <title>Complete sequence of Pseudomonas putida GB-1.</title>
        <authorList>
            <consortium name="US DOE Joint Genome Institute"/>
            <person name="Copeland A."/>
            <person name="Lucas S."/>
            <person name="Lapidus A."/>
            <person name="Barry K."/>
            <person name="Glavina del Rio T."/>
            <person name="Dalin E."/>
            <person name="Tice H."/>
            <person name="Pitluck S."/>
            <person name="Bruce D."/>
            <person name="Goodwin L."/>
            <person name="Chertkov O."/>
            <person name="Brettin T."/>
            <person name="Detter J.C."/>
            <person name="Han C."/>
            <person name="Kuske C.R."/>
            <person name="Schmutz J."/>
            <person name="Larimer F."/>
            <person name="Land M."/>
            <person name="Hauser L."/>
            <person name="Kyrpides N."/>
            <person name="Kim E."/>
            <person name="McCarthy J.K."/>
            <person name="Richardson P."/>
        </authorList>
    </citation>
    <scope>NUCLEOTIDE SEQUENCE [LARGE SCALE GENOMIC DNA]</scope>
    <source>
        <strain>GB-1</strain>
    </source>
</reference>
<feature type="chain" id="PRO_1000083495" description="Oxygen-dependent choline dehydrogenase">
    <location>
        <begin position="1"/>
        <end position="565"/>
    </location>
</feature>
<feature type="active site" description="Proton acceptor" evidence="1">
    <location>
        <position position="475"/>
    </location>
</feature>
<feature type="binding site" evidence="1">
    <location>
        <begin position="6"/>
        <end position="35"/>
    </location>
    <ligand>
        <name>FAD</name>
        <dbReference type="ChEBI" id="CHEBI:57692"/>
    </ligand>
</feature>